<organism>
    <name type="scientific">Zea mays</name>
    <name type="common">Maize</name>
    <dbReference type="NCBI Taxonomy" id="4577"/>
    <lineage>
        <taxon>Eukaryota</taxon>
        <taxon>Viridiplantae</taxon>
        <taxon>Streptophyta</taxon>
        <taxon>Embryophyta</taxon>
        <taxon>Tracheophyta</taxon>
        <taxon>Spermatophyta</taxon>
        <taxon>Magnoliopsida</taxon>
        <taxon>Liliopsida</taxon>
        <taxon>Poales</taxon>
        <taxon>Poaceae</taxon>
        <taxon>PACMAD clade</taxon>
        <taxon>Panicoideae</taxon>
        <taxon>Andropogonodae</taxon>
        <taxon>Andropogoneae</taxon>
        <taxon>Tripsacinae</taxon>
        <taxon>Zea</taxon>
    </lineage>
</organism>
<comment type="function">
    <text evidence="1">Associates with the EF-Tu.GDP complex and induces the exchange of GDP to GTP. It remains bound to the aminoacyl-tRNA.EF-Tu.GTP complex up to the GTP hydrolysis stage on the ribosome.</text>
</comment>
<comment type="subcellular location">
    <subcellularLocation>
        <location evidence="1">Mitochondrion</location>
    </subcellularLocation>
</comment>
<comment type="similarity">
    <text evidence="1">Belongs to the EF-Ts family.</text>
</comment>
<evidence type="ECO:0000255" key="1">
    <source>
        <dbReference type="HAMAP-Rule" id="MF_03135"/>
    </source>
</evidence>
<proteinExistence type="evidence at transcript level"/>
<feature type="transit peptide" description="Mitochondrion" evidence="1">
    <location>
        <begin position="1"/>
        <end position="33"/>
    </location>
</feature>
<feature type="chain" id="PRO_0000402330" description="Elongation factor Ts, mitochondrial">
    <location>
        <begin position="34"/>
        <end position="379"/>
    </location>
</feature>
<reference key="1">
    <citation type="journal article" date="2009" name="PLoS Genet.">
        <title>Sequencing, mapping, and analysis of 27,455 maize full-length cDNAs.</title>
        <authorList>
            <person name="Soderlund C."/>
            <person name="Descour A."/>
            <person name="Kudrna D."/>
            <person name="Bomhoff M."/>
            <person name="Boyd L."/>
            <person name="Currie J."/>
            <person name="Angelova A."/>
            <person name="Collura K."/>
            <person name="Wissotski M."/>
            <person name="Ashley E."/>
            <person name="Morrow D."/>
            <person name="Fernandes J."/>
            <person name="Walbot V."/>
            <person name="Yu Y."/>
        </authorList>
    </citation>
    <scope>NUCLEOTIDE SEQUENCE [LARGE SCALE MRNA]</scope>
    <source>
        <strain>B73</strain>
    </source>
</reference>
<dbReference type="EMBL" id="BT036538">
    <property type="protein sequence ID" value="ACF81543.1"/>
    <property type="molecule type" value="mRNA"/>
</dbReference>
<dbReference type="RefSeq" id="NP_001132619.1">
    <property type="nucleotide sequence ID" value="NM_001139147.1"/>
</dbReference>
<dbReference type="RefSeq" id="XP_008672198.1">
    <property type="nucleotide sequence ID" value="XM_008673976.1"/>
</dbReference>
<dbReference type="SMR" id="B4FHF0"/>
<dbReference type="FunCoup" id="B4FHF0">
    <property type="interactions" value="3339"/>
</dbReference>
<dbReference type="STRING" id="4577.B4FHF0"/>
<dbReference type="PaxDb" id="4577-GRMZM2G095534_P02"/>
<dbReference type="EnsemblPlants" id="Zm00001eb160260_T003">
    <property type="protein sequence ID" value="Zm00001eb160260_P003"/>
    <property type="gene ID" value="Zm00001eb160260"/>
</dbReference>
<dbReference type="EnsemblPlants" id="Zm00001eb160260_T004">
    <property type="protein sequence ID" value="Zm00001eb160260_P004"/>
    <property type="gene ID" value="Zm00001eb160260"/>
</dbReference>
<dbReference type="EnsemblPlants" id="Zm00001eb160260_T006">
    <property type="protein sequence ID" value="Zm00001eb160260_P006"/>
    <property type="gene ID" value="Zm00001eb160260"/>
</dbReference>
<dbReference type="EnsemblPlants" id="Zm00001eb160260_T007">
    <property type="protein sequence ID" value="Zm00001eb160260_P007"/>
    <property type="gene ID" value="Zm00001eb160260"/>
</dbReference>
<dbReference type="GeneID" id="100194093"/>
<dbReference type="Gramene" id="Zm00001eb160260_T003">
    <property type="protein sequence ID" value="Zm00001eb160260_P003"/>
    <property type="gene ID" value="Zm00001eb160260"/>
</dbReference>
<dbReference type="Gramene" id="Zm00001eb160260_T004">
    <property type="protein sequence ID" value="Zm00001eb160260_P004"/>
    <property type="gene ID" value="Zm00001eb160260"/>
</dbReference>
<dbReference type="Gramene" id="Zm00001eb160260_T006">
    <property type="protein sequence ID" value="Zm00001eb160260_P006"/>
    <property type="gene ID" value="Zm00001eb160260"/>
</dbReference>
<dbReference type="Gramene" id="Zm00001eb160260_T007">
    <property type="protein sequence ID" value="Zm00001eb160260_P007"/>
    <property type="gene ID" value="Zm00001eb160260"/>
</dbReference>
<dbReference type="KEGG" id="zma:100194093"/>
<dbReference type="eggNOG" id="KOG1071">
    <property type="taxonomic scope" value="Eukaryota"/>
</dbReference>
<dbReference type="InParanoid" id="B4FHF0"/>
<dbReference type="OMA" id="QEYMLDD"/>
<dbReference type="OrthoDB" id="277235at2759"/>
<dbReference type="Proteomes" id="UP000007305">
    <property type="component" value="Chromosome 3"/>
</dbReference>
<dbReference type="ExpressionAtlas" id="B4FHF0">
    <property type="expression patterns" value="baseline and differential"/>
</dbReference>
<dbReference type="GO" id="GO:0005739">
    <property type="term" value="C:mitochondrion"/>
    <property type="evidence" value="ECO:0007669"/>
    <property type="project" value="UniProtKB-SubCell"/>
</dbReference>
<dbReference type="GO" id="GO:0003746">
    <property type="term" value="F:translation elongation factor activity"/>
    <property type="evidence" value="ECO:0000318"/>
    <property type="project" value="GO_Central"/>
</dbReference>
<dbReference type="GO" id="GO:0070125">
    <property type="term" value="P:mitochondrial translational elongation"/>
    <property type="evidence" value="ECO:0000318"/>
    <property type="project" value="GO_Central"/>
</dbReference>
<dbReference type="CDD" id="cd14275">
    <property type="entry name" value="UBA_EF-Ts"/>
    <property type="match status" value="1"/>
</dbReference>
<dbReference type="FunFam" id="1.10.286.20:FF:000001">
    <property type="entry name" value="Elongation factor Ts"/>
    <property type="match status" value="1"/>
</dbReference>
<dbReference type="FunFam" id="1.10.8.10:FF:000001">
    <property type="entry name" value="Elongation factor Ts"/>
    <property type="match status" value="1"/>
</dbReference>
<dbReference type="FunFam" id="3.30.479.20:FF:000012">
    <property type="entry name" value="Elongation factor Ts, mitochondrial"/>
    <property type="match status" value="1"/>
</dbReference>
<dbReference type="Gene3D" id="1.10.286.20">
    <property type="match status" value="1"/>
</dbReference>
<dbReference type="Gene3D" id="1.10.8.10">
    <property type="entry name" value="DNA helicase RuvA subunit, C-terminal domain"/>
    <property type="match status" value="1"/>
</dbReference>
<dbReference type="Gene3D" id="3.30.479.20">
    <property type="entry name" value="Elongation factor Ts, dimerisation domain"/>
    <property type="match status" value="2"/>
</dbReference>
<dbReference type="HAMAP" id="MF_00050">
    <property type="entry name" value="EF_Ts"/>
    <property type="match status" value="1"/>
</dbReference>
<dbReference type="InterPro" id="IPR036402">
    <property type="entry name" value="EF-Ts_dimer_sf"/>
</dbReference>
<dbReference type="InterPro" id="IPR001816">
    <property type="entry name" value="Transl_elong_EFTs/EF1B"/>
</dbReference>
<dbReference type="InterPro" id="IPR014039">
    <property type="entry name" value="Transl_elong_EFTs/EF1B_dimer"/>
</dbReference>
<dbReference type="InterPro" id="IPR018101">
    <property type="entry name" value="Transl_elong_Ts_CS"/>
</dbReference>
<dbReference type="InterPro" id="IPR009060">
    <property type="entry name" value="UBA-like_sf"/>
</dbReference>
<dbReference type="NCBIfam" id="TIGR00116">
    <property type="entry name" value="tsf"/>
    <property type="match status" value="1"/>
</dbReference>
<dbReference type="PANTHER" id="PTHR11741">
    <property type="entry name" value="ELONGATION FACTOR TS"/>
    <property type="match status" value="1"/>
</dbReference>
<dbReference type="PANTHER" id="PTHR11741:SF0">
    <property type="entry name" value="ELONGATION FACTOR TS, MITOCHONDRIAL"/>
    <property type="match status" value="1"/>
</dbReference>
<dbReference type="Pfam" id="PF00889">
    <property type="entry name" value="EF_TS"/>
    <property type="match status" value="1"/>
</dbReference>
<dbReference type="SUPFAM" id="SSF54713">
    <property type="entry name" value="Elongation factor Ts (EF-Ts), dimerisation domain"/>
    <property type="match status" value="1"/>
</dbReference>
<dbReference type="SUPFAM" id="SSF46934">
    <property type="entry name" value="UBA-like"/>
    <property type="match status" value="1"/>
</dbReference>
<dbReference type="PROSITE" id="PS01127">
    <property type="entry name" value="EF_TS_2"/>
    <property type="match status" value="1"/>
</dbReference>
<name>EFTS_MAIZE</name>
<protein>
    <recommendedName>
        <fullName evidence="1">Elongation factor Ts, mitochondrial</fullName>
        <shortName evidence="1">EF-Ts</shortName>
        <shortName evidence="1">EF-TsMt</shortName>
    </recommendedName>
</protein>
<gene>
    <name evidence="1" type="primary">EFTS</name>
</gene>
<accession>B4FHF0</accession>
<sequence length="379" mass="41214">MAWGQGAKRSILGLLFRSQHQTARAYSSSAFQTHQLSTHVPQDGVFIRRFGSEVSSSEQMNLIKQLRQRTSAPIKDVKASLVTCNWDIEAAQKDLRKRGVALAAKKSSRTAAEGLLAIAQDDKRAAVVELNCETDFVARNDVFQYLASSLAKMALSAQGPGELFMPFGPELLENMPINLDHPKLSVETTVQSAVTEVAAMVGENVKLRRGFMLSTTAHGVVSSYMHTCPQPGMGRIAGLVTLETEDSSTLLDSVKSVGSSIAMHIVAAKPLFLSKELVSASALENEREILRTQAQSSGKSQMAMDKMVEGRLRKYFEEVVLMEQKYVLNDSTNIKTVLNDLSKEVGSKVTIGNFIRMEVGEGIERTEAADGLEVAGGAM</sequence>
<keyword id="KW-0251">Elongation factor</keyword>
<keyword id="KW-0496">Mitochondrion</keyword>
<keyword id="KW-0648">Protein biosynthesis</keyword>
<keyword id="KW-1185">Reference proteome</keyword>
<keyword id="KW-0809">Transit peptide</keyword>